<name>HEM1_VIBCH</name>
<organism>
    <name type="scientific">Vibrio cholerae serotype O1 (strain ATCC 39315 / El Tor Inaba N16961)</name>
    <dbReference type="NCBI Taxonomy" id="243277"/>
    <lineage>
        <taxon>Bacteria</taxon>
        <taxon>Pseudomonadati</taxon>
        <taxon>Pseudomonadota</taxon>
        <taxon>Gammaproteobacteria</taxon>
        <taxon>Vibrionales</taxon>
        <taxon>Vibrionaceae</taxon>
        <taxon>Vibrio</taxon>
    </lineage>
</organism>
<reference key="1">
    <citation type="submission" date="2000-01" db="EMBL/GenBank/DDBJ databases">
        <title>Cloning and characterization of hemA and hemM gene of Vibrio cholerae (Bengal strain).</title>
        <authorList>
            <person name="Ravichandran M."/>
            <person name="Lalitha P."/>
            <person name="Tang T.H."/>
            <person name="Chan Y.Y."/>
            <person name="Johari M.R."/>
            <person name="Zainuddin Z.F."/>
        </authorList>
    </citation>
    <scope>NUCLEOTIDE SEQUENCE [GENOMIC DNA]</scope>
    <source>
        <strain>Bengal</strain>
    </source>
</reference>
<reference key="2">
    <citation type="journal article" date="2000" name="Nature">
        <title>DNA sequence of both chromosomes of the cholera pathogen Vibrio cholerae.</title>
        <authorList>
            <person name="Heidelberg J.F."/>
            <person name="Eisen J.A."/>
            <person name="Nelson W.C."/>
            <person name="Clayton R.A."/>
            <person name="Gwinn M.L."/>
            <person name="Dodson R.J."/>
            <person name="Haft D.H."/>
            <person name="Hickey E.K."/>
            <person name="Peterson J.D."/>
            <person name="Umayam L.A."/>
            <person name="Gill S.R."/>
            <person name="Nelson K.E."/>
            <person name="Read T.D."/>
            <person name="Tettelin H."/>
            <person name="Richardson D.L."/>
            <person name="Ermolaeva M.D."/>
            <person name="Vamathevan J.J."/>
            <person name="Bass S."/>
            <person name="Qin H."/>
            <person name="Dragoi I."/>
            <person name="Sellers P."/>
            <person name="McDonald L.A."/>
            <person name="Utterback T.R."/>
            <person name="Fleischmann R.D."/>
            <person name="Nierman W.C."/>
            <person name="White O."/>
            <person name="Salzberg S.L."/>
            <person name="Smith H.O."/>
            <person name="Colwell R.R."/>
            <person name="Mekalanos J.J."/>
            <person name="Venter J.C."/>
            <person name="Fraser C.M."/>
        </authorList>
    </citation>
    <scope>NUCLEOTIDE SEQUENCE [LARGE SCALE GENOMIC DNA]</scope>
    <source>
        <strain>ATCC 39315 / El Tor Inaba N16961</strain>
    </source>
</reference>
<keyword id="KW-0521">NADP</keyword>
<keyword id="KW-0560">Oxidoreductase</keyword>
<keyword id="KW-0627">Porphyrin biosynthesis</keyword>
<keyword id="KW-1185">Reference proteome</keyword>
<protein>
    <recommendedName>
        <fullName evidence="1">Glutamyl-tRNA reductase</fullName>
        <shortName evidence="1">GluTR</shortName>
        <ecNumber evidence="1">1.2.1.70</ecNumber>
    </recommendedName>
</protein>
<gene>
    <name evidence="1" type="primary">hemA</name>
    <name type="ordered locus">VC_2180</name>
</gene>
<sequence>MSLLAIGINHNTASVELREKVAFGPEKLSLALNQLSTSSHVKGGVILSTCNRTEIYCDVRSASKNKVIEWLSQFHQVSLDELKPSLYVHEEQAAIRHLMRVACGLDSLVLGEPQILGQVKQAYAEARENHAVNPATEKLFQKAFSVAKRVRTETEIGGSAVSVAYAACTLAKHIFESLADATVLLVGAGETIELVAKHLAGHHCKRMIVANRTRERALSLAQQFGADVIALNEIPDYLAQADIVISSTASPLPIIGKGMVESALKARRHQPMLLVDIAVPRDIEPQVGKLNDAYLYSVDDLQSIVDSNIEQRKVEAIQAEAIVSEESATFMSWMRSLQAVDSIRDYRKQANEAREELLNKSLQALAAGGDPEKLLIELSNKLTNKLIHTPTRALQTAAEQGEPAKLAVIRQSLGLDDLN</sequence>
<accession>Q9KQ24</accession>
<dbReference type="EC" id="1.2.1.70" evidence="1"/>
<dbReference type="EMBL" id="AF227752">
    <property type="protein sequence ID" value="AAK00701.1"/>
    <property type="molecule type" value="Genomic_DNA"/>
</dbReference>
<dbReference type="EMBL" id="AE003852">
    <property type="protein sequence ID" value="AAF95325.1"/>
    <property type="molecule type" value="Genomic_DNA"/>
</dbReference>
<dbReference type="PIR" id="C82109">
    <property type="entry name" value="C82109"/>
</dbReference>
<dbReference type="RefSeq" id="NP_231811.1">
    <property type="nucleotide sequence ID" value="NC_002505.1"/>
</dbReference>
<dbReference type="RefSeq" id="WP_000054219.1">
    <property type="nucleotide sequence ID" value="NZ_LT906614.1"/>
</dbReference>
<dbReference type="SMR" id="Q9KQ24"/>
<dbReference type="STRING" id="243277.VC_2180"/>
<dbReference type="DNASU" id="2613316"/>
<dbReference type="EnsemblBacteria" id="AAF95325">
    <property type="protein sequence ID" value="AAF95325"/>
    <property type="gene ID" value="VC_2180"/>
</dbReference>
<dbReference type="GeneID" id="89513844"/>
<dbReference type="KEGG" id="vch:VC_2180"/>
<dbReference type="PATRIC" id="fig|243277.26.peg.2078"/>
<dbReference type="eggNOG" id="COG0373">
    <property type="taxonomic scope" value="Bacteria"/>
</dbReference>
<dbReference type="HOGENOM" id="CLU_035113_2_2_6"/>
<dbReference type="UniPathway" id="UPA00251">
    <property type="reaction ID" value="UER00316"/>
</dbReference>
<dbReference type="Proteomes" id="UP000000584">
    <property type="component" value="Chromosome 1"/>
</dbReference>
<dbReference type="GO" id="GO:0008883">
    <property type="term" value="F:glutamyl-tRNA reductase activity"/>
    <property type="evidence" value="ECO:0000318"/>
    <property type="project" value="GO_Central"/>
</dbReference>
<dbReference type="GO" id="GO:0050661">
    <property type="term" value="F:NADP binding"/>
    <property type="evidence" value="ECO:0007669"/>
    <property type="project" value="InterPro"/>
</dbReference>
<dbReference type="GO" id="GO:0019353">
    <property type="term" value="P:protoporphyrinogen IX biosynthetic process from glutamate"/>
    <property type="evidence" value="ECO:0000318"/>
    <property type="project" value="GO_Central"/>
</dbReference>
<dbReference type="CDD" id="cd05213">
    <property type="entry name" value="NAD_bind_Glutamyl_tRNA_reduct"/>
    <property type="match status" value="1"/>
</dbReference>
<dbReference type="FunFam" id="3.30.460.30:FF:000001">
    <property type="entry name" value="Glutamyl-tRNA reductase"/>
    <property type="match status" value="1"/>
</dbReference>
<dbReference type="FunFam" id="3.40.50.720:FF:000031">
    <property type="entry name" value="Glutamyl-tRNA reductase"/>
    <property type="match status" value="1"/>
</dbReference>
<dbReference type="Gene3D" id="3.30.460.30">
    <property type="entry name" value="Glutamyl-tRNA reductase, N-terminal domain"/>
    <property type="match status" value="1"/>
</dbReference>
<dbReference type="Gene3D" id="3.40.50.720">
    <property type="entry name" value="NAD(P)-binding Rossmann-like Domain"/>
    <property type="match status" value="1"/>
</dbReference>
<dbReference type="HAMAP" id="MF_00087">
    <property type="entry name" value="Glu_tRNA_reductase"/>
    <property type="match status" value="1"/>
</dbReference>
<dbReference type="InterPro" id="IPR000343">
    <property type="entry name" value="4pyrrol_synth_GluRdtase"/>
</dbReference>
<dbReference type="InterPro" id="IPR015896">
    <property type="entry name" value="4pyrrol_synth_GluRdtase_dimer"/>
</dbReference>
<dbReference type="InterPro" id="IPR015895">
    <property type="entry name" value="4pyrrol_synth_GluRdtase_N"/>
</dbReference>
<dbReference type="InterPro" id="IPR018214">
    <property type="entry name" value="GluRdtase_CS"/>
</dbReference>
<dbReference type="InterPro" id="IPR036453">
    <property type="entry name" value="GluRdtase_dimer_dom_sf"/>
</dbReference>
<dbReference type="InterPro" id="IPR036343">
    <property type="entry name" value="GluRdtase_N_sf"/>
</dbReference>
<dbReference type="InterPro" id="IPR036291">
    <property type="entry name" value="NAD(P)-bd_dom_sf"/>
</dbReference>
<dbReference type="InterPro" id="IPR006151">
    <property type="entry name" value="Shikm_DH/Glu-tRNA_Rdtase"/>
</dbReference>
<dbReference type="NCBIfam" id="TIGR01035">
    <property type="entry name" value="hemA"/>
    <property type="match status" value="1"/>
</dbReference>
<dbReference type="PANTHER" id="PTHR43013">
    <property type="entry name" value="GLUTAMYL-TRNA REDUCTASE"/>
    <property type="match status" value="1"/>
</dbReference>
<dbReference type="PANTHER" id="PTHR43013:SF1">
    <property type="entry name" value="GLUTAMYL-TRNA REDUCTASE"/>
    <property type="match status" value="1"/>
</dbReference>
<dbReference type="Pfam" id="PF00745">
    <property type="entry name" value="GlutR_dimer"/>
    <property type="match status" value="1"/>
</dbReference>
<dbReference type="Pfam" id="PF05201">
    <property type="entry name" value="GlutR_N"/>
    <property type="match status" value="1"/>
</dbReference>
<dbReference type="Pfam" id="PF01488">
    <property type="entry name" value="Shikimate_DH"/>
    <property type="match status" value="1"/>
</dbReference>
<dbReference type="PIRSF" id="PIRSF000445">
    <property type="entry name" value="4pyrrol_synth_GluRdtase"/>
    <property type="match status" value="1"/>
</dbReference>
<dbReference type="SUPFAM" id="SSF69742">
    <property type="entry name" value="Glutamyl tRNA-reductase catalytic, N-terminal domain"/>
    <property type="match status" value="1"/>
</dbReference>
<dbReference type="SUPFAM" id="SSF69075">
    <property type="entry name" value="Glutamyl tRNA-reductase dimerization domain"/>
    <property type="match status" value="1"/>
</dbReference>
<dbReference type="SUPFAM" id="SSF51735">
    <property type="entry name" value="NAD(P)-binding Rossmann-fold domains"/>
    <property type="match status" value="1"/>
</dbReference>
<dbReference type="PROSITE" id="PS00747">
    <property type="entry name" value="GLUTR"/>
    <property type="match status" value="1"/>
</dbReference>
<proteinExistence type="inferred from homology"/>
<evidence type="ECO:0000255" key="1">
    <source>
        <dbReference type="HAMAP-Rule" id="MF_00087"/>
    </source>
</evidence>
<comment type="function">
    <text evidence="1">Catalyzes the NADPH-dependent reduction of glutamyl-tRNA(Glu) to glutamate 1-semialdehyde (GSA).</text>
</comment>
<comment type="catalytic activity">
    <reaction evidence="1">
        <text>(S)-4-amino-5-oxopentanoate + tRNA(Glu) + NADP(+) = L-glutamyl-tRNA(Glu) + NADPH + H(+)</text>
        <dbReference type="Rhea" id="RHEA:12344"/>
        <dbReference type="Rhea" id="RHEA-COMP:9663"/>
        <dbReference type="Rhea" id="RHEA-COMP:9680"/>
        <dbReference type="ChEBI" id="CHEBI:15378"/>
        <dbReference type="ChEBI" id="CHEBI:57501"/>
        <dbReference type="ChEBI" id="CHEBI:57783"/>
        <dbReference type="ChEBI" id="CHEBI:58349"/>
        <dbReference type="ChEBI" id="CHEBI:78442"/>
        <dbReference type="ChEBI" id="CHEBI:78520"/>
        <dbReference type="EC" id="1.2.1.70"/>
    </reaction>
</comment>
<comment type="pathway">
    <text evidence="1">Porphyrin-containing compound metabolism; protoporphyrin-IX biosynthesis; 5-aminolevulinate from L-glutamyl-tRNA(Glu): step 1/2.</text>
</comment>
<comment type="subunit">
    <text evidence="1">Homodimer.</text>
</comment>
<comment type="domain">
    <text evidence="1">Possesses an unusual extended V-shaped dimeric structure with each monomer consisting of three distinct domains arranged along a curved 'spinal' alpha-helix. The N-terminal catalytic domain specifically recognizes the glutamate moiety of the substrate. The second domain is the NADPH-binding domain, and the third C-terminal domain is responsible for dimerization.</text>
</comment>
<comment type="miscellaneous">
    <text evidence="1">During catalysis, the active site Cys acts as a nucleophile attacking the alpha-carbonyl group of tRNA-bound glutamate with the formation of a thioester intermediate between enzyme and glutamate, and the concomitant release of tRNA(Glu). The thioester intermediate is finally reduced by direct hydride transfer from NADPH, to form the product GSA.</text>
</comment>
<comment type="similarity">
    <text evidence="1">Belongs to the glutamyl-tRNA reductase family.</text>
</comment>
<feature type="chain" id="PRO_0000114083" description="Glutamyl-tRNA reductase">
    <location>
        <begin position="1"/>
        <end position="419"/>
    </location>
</feature>
<feature type="active site" description="Nucleophile" evidence="1">
    <location>
        <position position="50"/>
    </location>
</feature>
<feature type="binding site" evidence="1">
    <location>
        <begin position="49"/>
        <end position="52"/>
    </location>
    <ligand>
        <name>substrate</name>
    </ligand>
</feature>
<feature type="binding site" evidence="1">
    <location>
        <position position="107"/>
    </location>
    <ligand>
        <name>substrate</name>
    </ligand>
</feature>
<feature type="binding site" evidence="1">
    <location>
        <begin position="112"/>
        <end position="114"/>
    </location>
    <ligand>
        <name>substrate</name>
    </ligand>
</feature>
<feature type="binding site" evidence="1">
    <location>
        <position position="118"/>
    </location>
    <ligand>
        <name>substrate</name>
    </ligand>
</feature>
<feature type="binding site" evidence="1">
    <location>
        <begin position="187"/>
        <end position="192"/>
    </location>
    <ligand>
        <name>NADP(+)</name>
        <dbReference type="ChEBI" id="CHEBI:58349"/>
    </ligand>
</feature>
<feature type="site" description="Important for activity" evidence="1">
    <location>
        <position position="97"/>
    </location>
</feature>